<protein>
    <recommendedName>
        <fullName evidence="1">NH(3)-dependent NAD(+) synthetase</fullName>
        <ecNumber evidence="1">6.3.1.5</ecNumber>
    </recommendedName>
</protein>
<organism>
    <name type="scientific">Thermoplasma acidophilum (strain ATCC 25905 / DSM 1728 / JCM 9062 / NBRC 15155 / AMRC-C165)</name>
    <dbReference type="NCBI Taxonomy" id="273075"/>
    <lineage>
        <taxon>Archaea</taxon>
        <taxon>Methanobacteriati</taxon>
        <taxon>Thermoplasmatota</taxon>
        <taxon>Thermoplasmata</taxon>
        <taxon>Thermoplasmatales</taxon>
        <taxon>Thermoplasmataceae</taxon>
        <taxon>Thermoplasma</taxon>
    </lineage>
</organism>
<name>NADE_THEAC</name>
<comment type="function">
    <text evidence="1">Catalyzes the ATP-dependent amidation of deamido-NAD to form NAD. Uses ammonia as a nitrogen source.</text>
</comment>
<comment type="catalytic activity">
    <reaction evidence="1">
        <text>deamido-NAD(+) + NH4(+) + ATP = AMP + diphosphate + NAD(+) + H(+)</text>
        <dbReference type="Rhea" id="RHEA:21188"/>
        <dbReference type="ChEBI" id="CHEBI:15378"/>
        <dbReference type="ChEBI" id="CHEBI:28938"/>
        <dbReference type="ChEBI" id="CHEBI:30616"/>
        <dbReference type="ChEBI" id="CHEBI:33019"/>
        <dbReference type="ChEBI" id="CHEBI:57540"/>
        <dbReference type="ChEBI" id="CHEBI:58437"/>
        <dbReference type="ChEBI" id="CHEBI:456215"/>
        <dbReference type="EC" id="6.3.1.5"/>
    </reaction>
</comment>
<comment type="pathway">
    <text evidence="1">Cofactor biosynthesis; NAD(+) biosynthesis; NAD(+) from deamido-NAD(+) (ammonia route): step 1/1.</text>
</comment>
<comment type="subunit">
    <text evidence="1">Homodimer.</text>
</comment>
<comment type="similarity">
    <text evidence="1">Belongs to the NAD synthetase family.</text>
</comment>
<keyword id="KW-0067">ATP-binding</keyword>
<keyword id="KW-0436">Ligase</keyword>
<keyword id="KW-0460">Magnesium</keyword>
<keyword id="KW-0479">Metal-binding</keyword>
<keyword id="KW-0520">NAD</keyword>
<keyword id="KW-0547">Nucleotide-binding</keyword>
<keyword id="KW-1185">Reference proteome</keyword>
<feature type="chain" id="PRO_0000152237" description="NH(3)-dependent NAD(+) synthetase">
    <location>
        <begin position="1"/>
        <end position="241"/>
    </location>
</feature>
<feature type="binding site" evidence="1">
    <location>
        <begin position="27"/>
        <end position="34"/>
    </location>
    <ligand>
        <name>ATP</name>
        <dbReference type="ChEBI" id="CHEBI:30616"/>
    </ligand>
</feature>
<feature type="binding site" evidence="1">
    <location>
        <position position="33"/>
    </location>
    <ligand>
        <name>Mg(2+)</name>
        <dbReference type="ChEBI" id="CHEBI:18420"/>
    </ligand>
</feature>
<feature type="binding site" evidence="1">
    <location>
        <position position="109"/>
    </location>
    <ligand>
        <name>deamido-NAD(+)</name>
        <dbReference type="ChEBI" id="CHEBI:58437"/>
    </ligand>
</feature>
<feature type="binding site" evidence="1">
    <location>
        <position position="129"/>
    </location>
    <ligand>
        <name>ATP</name>
        <dbReference type="ChEBI" id="CHEBI:30616"/>
    </ligand>
</feature>
<feature type="binding site" evidence="1">
    <location>
        <position position="134"/>
    </location>
    <ligand>
        <name>Mg(2+)</name>
        <dbReference type="ChEBI" id="CHEBI:18420"/>
    </ligand>
</feature>
<feature type="binding site" evidence="1">
    <location>
        <position position="142"/>
    </location>
    <ligand>
        <name>deamido-NAD(+)</name>
        <dbReference type="ChEBI" id="CHEBI:58437"/>
    </ligand>
</feature>
<feature type="binding site" evidence="1">
    <location>
        <position position="149"/>
    </location>
    <ligand>
        <name>deamido-NAD(+)</name>
        <dbReference type="ChEBI" id="CHEBI:58437"/>
    </ligand>
</feature>
<feature type="binding site" evidence="1">
    <location>
        <position position="158"/>
    </location>
    <ligand>
        <name>ATP</name>
        <dbReference type="ChEBI" id="CHEBI:30616"/>
    </ligand>
</feature>
<feature type="binding site" evidence="1">
    <location>
        <position position="180"/>
    </location>
    <ligand>
        <name>ATP</name>
        <dbReference type="ChEBI" id="CHEBI:30616"/>
    </ligand>
</feature>
<feature type="binding site" evidence="1">
    <location>
        <begin position="231"/>
        <end position="232"/>
    </location>
    <ligand>
        <name>deamido-NAD(+)</name>
        <dbReference type="ChEBI" id="CHEBI:58437"/>
    </ligand>
</feature>
<reference key="1">
    <citation type="journal article" date="2000" name="Nature">
        <title>The genome sequence of the thermoacidophilic scavenger Thermoplasma acidophilum.</title>
        <authorList>
            <person name="Ruepp A."/>
            <person name="Graml W."/>
            <person name="Santos-Martinez M.-L."/>
            <person name="Koretke K.K."/>
            <person name="Volker C."/>
            <person name="Mewes H.-W."/>
            <person name="Frishman D."/>
            <person name="Stocker S."/>
            <person name="Lupas A.N."/>
            <person name="Baumeister W."/>
        </authorList>
    </citation>
    <scope>NUCLEOTIDE SEQUENCE [LARGE SCALE GENOMIC DNA]</scope>
    <source>
        <strain>ATCC 25905 / DSM 1728 / JCM 9062 / NBRC 15155 / AMRC-C165</strain>
    </source>
</reference>
<dbReference type="EC" id="6.3.1.5" evidence="1"/>
<dbReference type="EMBL" id="AL445065">
    <property type="protein sequence ID" value="CAC12028.1"/>
    <property type="molecule type" value="Genomic_DNA"/>
</dbReference>
<dbReference type="SMR" id="Q9HJR8"/>
<dbReference type="FunCoup" id="Q9HJR8">
    <property type="interactions" value="56"/>
</dbReference>
<dbReference type="STRING" id="273075.gene:9572114"/>
<dbReference type="PaxDb" id="273075-Ta0899"/>
<dbReference type="EnsemblBacteria" id="CAC12028">
    <property type="protein sequence ID" value="CAC12028"/>
    <property type="gene ID" value="CAC12028"/>
</dbReference>
<dbReference type="KEGG" id="tac:Ta0899"/>
<dbReference type="eggNOG" id="arCOG00069">
    <property type="taxonomic scope" value="Archaea"/>
</dbReference>
<dbReference type="HOGENOM" id="CLU_059327_1_1_2"/>
<dbReference type="InParanoid" id="Q9HJR8"/>
<dbReference type="OrthoDB" id="39312at2157"/>
<dbReference type="UniPathway" id="UPA00253">
    <property type="reaction ID" value="UER00333"/>
</dbReference>
<dbReference type="Proteomes" id="UP000001024">
    <property type="component" value="Chromosome"/>
</dbReference>
<dbReference type="GO" id="GO:0005737">
    <property type="term" value="C:cytoplasm"/>
    <property type="evidence" value="ECO:0007669"/>
    <property type="project" value="InterPro"/>
</dbReference>
<dbReference type="GO" id="GO:0005524">
    <property type="term" value="F:ATP binding"/>
    <property type="evidence" value="ECO:0007669"/>
    <property type="project" value="UniProtKB-UniRule"/>
</dbReference>
<dbReference type="GO" id="GO:0004359">
    <property type="term" value="F:glutaminase activity"/>
    <property type="evidence" value="ECO:0007669"/>
    <property type="project" value="InterPro"/>
</dbReference>
<dbReference type="GO" id="GO:0046872">
    <property type="term" value="F:metal ion binding"/>
    <property type="evidence" value="ECO:0007669"/>
    <property type="project" value="UniProtKB-KW"/>
</dbReference>
<dbReference type="GO" id="GO:0003952">
    <property type="term" value="F:NAD+ synthase (glutamine-hydrolyzing) activity"/>
    <property type="evidence" value="ECO:0007669"/>
    <property type="project" value="InterPro"/>
</dbReference>
<dbReference type="GO" id="GO:0008795">
    <property type="term" value="F:NAD+ synthase activity"/>
    <property type="evidence" value="ECO:0007669"/>
    <property type="project" value="UniProtKB-UniRule"/>
</dbReference>
<dbReference type="GO" id="GO:0009435">
    <property type="term" value="P:NAD biosynthetic process"/>
    <property type="evidence" value="ECO:0007669"/>
    <property type="project" value="UniProtKB-UniRule"/>
</dbReference>
<dbReference type="CDD" id="cd00553">
    <property type="entry name" value="NAD_synthase"/>
    <property type="match status" value="1"/>
</dbReference>
<dbReference type="Gene3D" id="3.40.50.620">
    <property type="entry name" value="HUPs"/>
    <property type="match status" value="1"/>
</dbReference>
<dbReference type="HAMAP" id="MF_00193">
    <property type="entry name" value="NadE_ammonia_dep"/>
    <property type="match status" value="1"/>
</dbReference>
<dbReference type="InterPro" id="IPR022310">
    <property type="entry name" value="NAD/GMP_synthase"/>
</dbReference>
<dbReference type="InterPro" id="IPR003694">
    <property type="entry name" value="NAD_synthase"/>
</dbReference>
<dbReference type="InterPro" id="IPR022926">
    <property type="entry name" value="NH(3)-dep_NAD(+)_synth"/>
</dbReference>
<dbReference type="InterPro" id="IPR014729">
    <property type="entry name" value="Rossmann-like_a/b/a_fold"/>
</dbReference>
<dbReference type="NCBIfam" id="TIGR00552">
    <property type="entry name" value="nadE"/>
    <property type="match status" value="1"/>
</dbReference>
<dbReference type="NCBIfam" id="NF010587">
    <property type="entry name" value="PRK13980.1"/>
    <property type="match status" value="1"/>
</dbReference>
<dbReference type="PANTHER" id="PTHR23090:SF9">
    <property type="entry name" value="GLUTAMINE-DEPENDENT NAD(+) SYNTHETASE"/>
    <property type="match status" value="1"/>
</dbReference>
<dbReference type="PANTHER" id="PTHR23090">
    <property type="entry name" value="NH 3 /GLUTAMINE-DEPENDENT NAD + SYNTHETASE"/>
    <property type="match status" value="1"/>
</dbReference>
<dbReference type="Pfam" id="PF02540">
    <property type="entry name" value="NAD_synthase"/>
    <property type="match status" value="1"/>
</dbReference>
<dbReference type="SUPFAM" id="SSF52402">
    <property type="entry name" value="Adenine nucleotide alpha hydrolases-like"/>
    <property type="match status" value="1"/>
</dbReference>
<sequence>MPDYMQEIERISEFLRKVLQGKNAVIGISGGIDSSVTLALLTRSIPKERIIPVFMPDRNTQQADYDDVQKLTQKLGLTYREVRIDPMVDSFVSTLAATDRAAIGNIKSRTRMIILYYFANTNGGMVVGTTNRTELLLGYFTKYGDGGCDVEPIEHLYKRDVYELAKILDIPESIMKKKPTAGLWAGQTDEDEIGMSYAQMDEILSDVFDKGTYNDKPEYKKIMEMHSLSDHKRNLPYSLKK</sequence>
<proteinExistence type="inferred from homology"/>
<accession>Q9HJR8</accession>
<gene>
    <name evidence="1" type="primary">nadE</name>
    <name type="ordered locus">Ta0899</name>
</gene>
<evidence type="ECO:0000255" key="1">
    <source>
        <dbReference type="HAMAP-Rule" id="MF_00193"/>
    </source>
</evidence>